<keyword id="KW-0470">Melanin biosynthesis</keyword>
<keyword id="KW-0521">NADP</keyword>
<keyword id="KW-0560">Oxidoreductase</keyword>
<keyword id="KW-1185">Reference proteome</keyword>
<evidence type="ECO:0000250" key="1">
    <source>
        <dbReference type="UniProtKB" id="L0E2Z4"/>
    </source>
</evidence>
<evidence type="ECO:0000250" key="2">
    <source>
        <dbReference type="UniProtKB" id="O93868"/>
    </source>
</evidence>
<evidence type="ECO:0000269" key="3">
    <source>
    </source>
</evidence>
<evidence type="ECO:0000269" key="4">
    <source>
    </source>
</evidence>
<evidence type="ECO:0000303" key="5">
    <source>
    </source>
</evidence>
<evidence type="ECO:0000305" key="6"/>
<evidence type="ECO:0000305" key="7">
    <source>
    </source>
</evidence>
<evidence type="ECO:0000305" key="8">
    <source>
    </source>
</evidence>
<sequence>MPGVTSERTASRFDAIPGPLGLASASLEGKVALVTGAGRGIGREMAMELGRRGAKVIVNYANSSESAQEVVNAIKKSGSDAVAIKANVSDVDQIVSLFDQAVKVWGKLHIVCSNSGVVSFGHVKDVTPEEFDRVFTINTRGQFFVAREAYKHLEVGGRLILMGSITGQAKGVPKHAVYSGSKGAIETFVRCMAVDFGDKKITVNAVAPGGIKTDMYHAVCREYIPGGTELDDEAVDEYASTWSPLGRVGLPIDIARCVCFLASQDGEWVNGKVLGIDGHAMM</sequence>
<feature type="chain" id="PRO_0000447724" description="Trihydroxynaphthalene reductase PfmaI">
    <location>
        <begin position="1"/>
        <end position="282"/>
    </location>
</feature>
<feature type="active site" description="Proton donor" evidence="2">
    <location>
        <position position="164"/>
    </location>
</feature>
<feature type="active site" description="Proton donor" evidence="2">
    <location>
        <position position="178"/>
    </location>
</feature>
<feature type="active site" description="Lowers pKa of active site Tyr" evidence="2">
    <location>
        <position position="182"/>
    </location>
</feature>
<feature type="binding site" evidence="1">
    <location>
        <position position="41"/>
    </location>
    <ligand>
        <name>NADP(+)</name>
        <dbReference type="ChEBI" id="CHEBI:58349"/>
    </ligand>
</feature>
<feature type="binding site" evidence="2">
    <location>
        <position position="114"/>
    </location>
    <ligand>
        <name>NADP(+)</name>
        <dbReference type="ChEBI" id="CHEBI:58349"/>
    </ligand>
</feature>
<feature type="binding site" evidence="1">
    <location>
        <position position="147"/>
    </location>
    <ligand>
        <name>NADP(+)</name>
        <dbReference type="ChEBI" id="CHEBI:58349"/>
    </ligand>
</feature>
<feature type="binding site" evidence="2">
    <location>
        <position position="178"/>
    </location>
    <ligand>
        <name>NADP(+)</name>
        <dbReference type="ChEBI" id="CHEBI:58349"/>
    </ligand>
</feature>
<feature type="binding site" evidence="2">
    <location>
        <position position="182"/>
    </location>
    <ligand>
        <name>NADP(+)</name>
        <dbReference type="ChEBI" id="CHEBI:58349"/>
    </ligand>
</feature>
<feature type="binding site" evidence="2">
    <location>
        <position position="211"/>
    </location>
    <ligand>
        <name>NADP(+)</name>
        <dbReference type="ChEBI" id="CHEBI:58349"/>
    </ligand>
</feature>
<feature type="binding site" evidence="1">
    <location>
        <position position="213"/>
    </location>
    <ligand>
        <name>NADP(+)</name>
        <dbReference type="ChEBI" id="CHEBI:58349"/>
    </ligand>
</feature>
<protein>
    <recommendedName>
        <fullName evidence="5">Trihydroxynaphthalene reductase PfmaI</fullName>
        <ecNumber evidence="8">1.1.1.-</ecNumber>
    </recommendedName>
    <alternativeName>
        <fullName evidence="5">Conidial pigment biosynthesis protein I</fullName>
    </alternativeName>
</protein>
<proteinExistence type="evidence at transcript level"/>
<organism>
    <name type="scientific">Pestalotiopsis fici (strain W106-1 / CGMCC3.15140)</name>
    <dbReference type="NCBI Taxonomy" id="1229662"/>
    <lineage>
        <taxon>Eukaryota</taxon>
        <taxon>Fungi</taxon>
        <taxon>Dikarya</taxon>
        <taxon>Ascomycota</taxon>
        <taxon>Pezizomycotina</taxon>
        <taxon>Sordariomycetes</taxon>
        <taxon>Xylariomycetidae</taxon>
        <taxon>Amphisphaeriales</taxon>
        <taxon>Sporocadaceae</taxon>
        <taxon>Pestalotiopsis</taxon>
    </lineage>
</organism>
<comment type="function">
    <text evidence="3 4 7 8">Trihydroxynaphthalene reductase involved the biosynthesis of dihydroxynaphthalene (DHN)-melanin, a bluish-green pigment forming a dark layer in the conidial wall that protects the conidia from UV radiations (PubMed:28517364). The first step of the pathway is the production of the pentaketide 1,3,6,8-tetrahydroxynaphthalene (1,3,6,8-THN or T4HN) by the polyketide synthase PfmaE though condensation of acetyl-CoA with malonyl-CoA. T4HN is not stable and easily oxidizes into the stable form flaviolin (PubMed:28517364). T4HN is also substrate of the hydroxynaphthalene reductase PfmaG to yield scytalone (PubMed:28517364). The scytalone dehydratase PfmaJ then reduces scytalone to 1,3,8-THN (PubMed:31116900). 1,3,8-THN is then substrate of the hydroxynaphthalene reductase PfmaI to yield vermelone (Probable). Vermelone is further converted by the multicopper oxidase PfmaD to 1,8-DHN (Probable). Finally the laccase PFICI_06862 transforms 1,8-DHN to DHN-melanin (Probable). The roles of the 5-oxoprolinase PfmaA and the proline iminopeptidase PfmaB within the cluster have not been elucidated yet (Probable).</text>
</comment>
<comment type="pathway">
    <text evidence="8">Pigment biosynthesis; melanin biosynthesis.</text>
</comment>
<comment type="induction">
    <text evidence="3 4">Expression is positively regulated by the cluster-specific transcription factor PfmaF.</text>
</comment>
<comment type="similarity">
    <text evidence="6">Belongs to the short-chain dehydrogenases/reductases (SDR) family.</text>
</comment>
<gene>
    <name evidence="5" type="primary">Pfmaj</name>
    <name type="ORF">PFICI_05460</name>
</gene>
<dbReference type="EC" id="1.1.1.-" evidence="8"/>
<dbReference type="EMBL" id="KI912111">
    <property type="protein sequence ID" value="ETS83584.1"/>
    <property type="molecule type" value="Genomic_DNA"/>
</dbReference>
<dbReference type="RefSeq" id="XP_007832232.1">
    <property type="nucleotide sequence ID" value="XM_007834041.1"/>
</dbReference>
<dbReference type="SMR" id="W3XC32"/>
<dbReference type="GeneID" id="19270473"/>
<dbReference type="KEGG" id="pfy:PFICI_05460"/>
<dbReference type="eggNOG" id="KOG0725">
    <property type="taxonomic scope" value="Eukaryota"/>
</dbReference>
<dbReference type="HOGENOM" id="CLU_010194_1_3_1"/>
<dbReference type="InParanoid" id="W3XC32"/>
<dbReference type="OMA" id="EYACTWS"/>
<dbReference type="OrthoDB" id="47007at2759"/>
<dbReference type="UniPathway" id="UPA00785"/>
<dbReference type="Proteomes" id="UP000030651">
    <property type="component" value="Unassembled WGS sequence"/>
</dbReference>
<dbReference type="GO" id="GO:0016614">
    <property type="term" value="F:oxidoreductase activity, acting on CH-OH group of donors"/>
    <property type="evidence" value="ECO:0007669"/>
    <property type="project" value="UniProtKB-ARBA"/>
</dbReference>
<dbReference type="GO" id="GO:0042438">
    <property type="term" value="P:melanin biosynthetic process"/>
    <property type="evidence" value="ECO:0007669"/>
    <property type="project" value="UniProtKB-UniPathway"/>
</dbReference>
<dbReference type="CDD" id="cd05362">
    <property type="entry name" value="THN_reductase-like_SDR_c"/>
    <property type="match status" value="1"/>
</dbReference>
<dbReference type="FunFam" id="3.40.50.720:FF:000084">
    <property type="entry name" value="Short-chain dehydrogenase reductase"/>
    <property type="match status" value="1"/>
</dbReference>
<dbReference type="Gene3D" id="3.40.50.720">
    <property type="entry name" value="NAD(P)-binding Rossmann-like Domain"/>
    <property type="match status" value="1"/>
</dbReference>
<dbReference type="InterPro" id="IPR036291">
    <property type="entry name" value="NAD(P)-bd_dom_sf"/>
</dbReference>
<dbReference type="InterPro" id="IPR020904">
    <property type="entry name" value="Sc_DH/Rdtase_CS"/>
</dbReference>
<dbReference type="InterPro" id="IPR002347">
    <property type="entry name" value="SDR_fam"/>
</dbReference>
<dbReference type="PANTHER" id="PTHR48107">
    <property type="entry name" value="NADPH-DEPENDENT ALDEHYDE REDUCTASE-LIKE PROTEIN, CHLOROPLASTIC-RELATED"/>
    <property type="match status" value="1"/>
</dbReference>
<dbReference type="PANTHER" id="PTHR48107:SF7">
    <property type="entry name" value="RE15974P"/>
    <property type="match status" value="1"/>
</dbReference>
<dbReference type="Pfam" id="PF13561">
    <property type="entry name" value="adh_short_C2"/>
    <property type="match status" value="1"/>
</dbReference>
<dbReference type="PRINTS" id="PR00081">
    <property type="entry name" value="GDHRDH"/>
</dbReference>
<dbReference type="SUPFAM" id="SSF51735">
    <property type="entry name" value="NAD(P)-binding Rossmann-fold domains"/>
    <property type="match status" value="1"/>
</dbReference>
<dbReference type="PROSITE" id="PS00061">
    <property type="entry name" value="ADH_SHORT"/>
    <property type="match status" value="1"/>
</dbReference>
<accession>W3XC32</accession>
<name>PFMAI_PESFW</name>
<reference key="1">
    <citation type="journal article" date="2015" name="BMC Genomics">
        <title>Genomic and transcriptomic analysis of the endophytic fungus Pestalotiopsis fici reveals its lifestyle and high potential for synthesis of natural products.</title>
        <authorList>
            <person name="Wang X."/>
            <person name="Zhang X."/>
            <person name="Liu L."/>
            <person name="Xiang M."/>
            <person name="Wang W."/>
            <person name="Sun X."/>
            <person name="Che Y."/>
            <person name="Guo L."/>
            <person name="Liu G."/>
            <person name="Guo L."/>
            <person name="Wang C."/>
            <person name="Yin W.B."/>
            <person name="Stadler M."/>
            <person name="Zhang X."/>
            <person name="Liu X."/>
        </authorList>
    </citation>
    <scope>NUCLEOTIDE SEQUENCE [LARGE SCALE GENOMIC DNA]</scope>
    <source>
        <strain>W106-1 / CGMCC3.15140</strain>
    </source>
</reference>
<reference key="2">
    <citation type="journal article" date="2017" name="Mol. Microbiol.">
        <title>A cryptic pigment biosynthetic pathway uncovered by heterologous expression is essential for conidial development in Pestalotiopsis fici.</title>
        <authorList>
            <person name="Zhang P."/>
            <person name="Wang X."/>
            <person name="Fan A."/>
            <person name="Zheng Y."/>
            <person name="Liu X."/>
            <person name="Wang S."/>
            <person name="Zou H."/>
            <person name="Oakley B.R."/>
            <person name="Keller N.P."/>
            <person name="Yin W.B."/>
        </authorList>
    </citation>
    <scope>FUNCTION</scope>
</reference>
<reference key="3">
    <citation type="journal article" date="2019" name="Mol. Microbiol.">
        <title>Two transcription factors cooperatively regulate DHN melanin biosynthesis and development in Pestalotiopsis fici.</title>
        <authorList>
            <person name="Zhang P."/>
            <person name="Zhou S."/>
            <person name="Wang G."/>
            <person name="An Z."/>
            <person name="Liu X."/>
            <person name="Li K."/>
            <person name="Yin W.B."/>
        </authorList>
    </citation>
    <scope>INDUCTION</scope>
    <scope>FUNCTION</scope>
    <scope>PATHWAY</scope>
</reference>